<keyword id="KW-0687">Ribonucleoprotein</keyword>
<keyword id="KW-0689">Ribosomal protein</keyword>
<name>RL33_BRUO2</name>
<reference key="1">
    <citation type="journal article" date="2009" name="PLoS ONE">
        <title>Genome degradation in Brucella ovis corresponds with narrowing of its host range and tissue tropism.</title>
        <authorList>
            <person name="Tsolis R.M."/>
            <person name="Seshadri R."/>
            <person name="Santos R.L."/>
            <person name="Sangari F.J."/>
            <person name="Lobo J.M."/>
            <person name="de Jong M.F."/>
            <person name="Ren Q."/>
            <person name="Myers G."/>
            <person name="Brinkac L.M."/>
            <person name="Nelson W.C."/>
            <person name="Deboy R.T."/>
            <person name="Angiuoli S."/>
            <person name="Khouri H."/>
            <person name="Dimitrov G."/>
            <person name="Robinson J.R."/>
            <person name="Mulligan S."/>
            <person name="Walker R.L."/>
            <person name="Elzer P.E."/>
            <person name="Hassan K.A."/>
            <person name="Paulsen I.T."/>
        </authorList>
    </citation>
    <scope>NUCLEOTIDE SEQUENCE [LARGE SCALE GENOMIC DNA]</scope>
    <source>
        <strain>ATCC 25840 / 63/290 / NCTC 10512</strain>
    </source>
</reference>
<organism>
    <name type="scientific">Brucella ovis (strain ATCC 25840 / 63/290 / NCTC 10512)</name>
    <dbReference type="NCBI Taxonomy" id="444178"/>
    <lineage>
        <taxon>Bacteria</taxon>
        <taxon>Pseudomonadati</taxon>
        <taxon>Pseudomonadota</taxon>
        <taxon>Alphaproteobacteria</taxon>
        <taxon>Hyphomicrobiales</taxon>
        <taxon>Brucellaceae</taxon>
        <taxon>Brucella/Ochrobactrum group</taxon>
        <taxon>Brucella</taxon>
    </lineage>
</organism>
<evidence type="ECO:0000255" key="1">
    <source>
        <dbReference type="HAMAP-Rule" id="MF_00294"/>
    </source>
</evidence>
<evidence type="ECO:0000305" key="2"/>
<feature type="chain" id="PRO_0000356412" description="Large ribosomal subunit protein bL33">
    <location>
        <begin position="1"/>
        <end position="55"/>
    </location>
</feature>
<dbReference type="EMBL" id="CP000709">
    <property type="protein sequence ID" value="ABQ62501.1"/>
    <property type="molecule type" value="Genomic_DNA"/>
</dbReference>
<dbReference type="RefSeq" id="WP_002966024.1">
    <property type="nucleotide sequence ID" value="NC_009504.1"/>
</dbReference>
<dbReference type="SMR" id="A5VUU1"/>
<dbReference type="GeneID" id="97535268"/>
<dbReference type="KEGG" id="bov:BOV_A0574"/>
<dbReference type="HOGENOM" id="CLU_190949_1_1_5"/>
<dbReference type="Proteomes" id="UP000006383">
    <property type="component" value="Chromosome II"/>
</dbReference>
<dbReference type="GO" id="GO:0022625">
    <property type="term" value="C:cytosolic large ribosomal subunit"/>
    <property type="evidence" value="ECO:0007669"/>
    <property type="project" value="TreeGrafter"/>
</dbReference>
<dbReference type="GO" id="GO:0003735">
    <property type="term" value="F:structural constituent of ribosome"/>
    <property type="evidence" value="ECO:0007669"/>
    <property type="project" value="InterPro"/>
</dbReference>
<dbReference type="GO" id="GO:0006412">
    <property type="term" value="P:translation"/>
    <property type="evidence" value="ECO:0007669"/>
    <property type="project" value="UniProtKB-UniRule"/>
</dbReference>
<dbReference type="Gene3D" id="2.20.28.120">
    <property type="entry name" value="Ribosomal protein L33"/>
    <property type="match status" value="1"/>
</dbReference>
<dbReference type="HAMAP" id="MF_00294">
    <property type="entry name" value="Ribosomal_bL33"/>
    <property type="match status" value="1"/>
</dbReference>
<dbReference type="InterPro" id="IPR001705">
    <property type="entry name" value="Ribosomal_bL33"/>
</dbReference>
<dbReference type="InterPro" id="IPR018264">
    <property type="entry name" value="Ribosomal_bL33_CS"/>
</dbReference>
<dbReference type="InterPro" id="IPR038584">
    <property type="entry name" value="Ribosomal_bL33_sf"/>
</dbReference>
<dbReference type="InterPro" id="IPR011332">
    <property type="entry name" value="Ribosomal_zn-bd"/>
</dbReference>
<dbReference type="NCBIfam" id="NF001860">
    <property type="entry name" value="PRK00595.1"/>
    <property type="match status" value="1"/>
</dbReference>
<dbReference type="NCBIfam" id="TIGR01023">
    <property type="entry name" value="rpmG_bact"/>
    <property type="match status" value="1"/>
</dbReference>
<dbReference type="PANTHER" id="PTHR15238">
    <property type="entry name" value="54S RIBOSOMAL PROTEIN L39, MITOCHONDRIAL"/>
    <property type="match status" value="1"/>
</dbReference>
<dbReference type="PANTHER" id="PTHR15238:SF1">
    <property type="entry name" value="LARGE RIBOSOMAL SUBUNIT PROTEIN BL33M"/>
    <property type="match status" value="1"/>
</dbReference>
<dbReference type="Pfam" id="PF00471">
    <property type="entry name" value="Ribosomal_L33"/>
    <property type="match status" value="1"/>
</dbReference>
<dbReference type="SUPFAM" id="SSF57829">
    <property type="entry name" value="Zn-binding ribosomal proteins"/>
    <property type="match status" value="1"/>
</dbReference>
<dbReference type="PROSITE" id="PS00582">
    <property type="entry name" value="RIBOSOMAL_L33"/>
    <property type="match status" value="1"/>
</dbReference>
<sequence>MAKATTIKIKLLSTADTGFFYVTKKNSRTMTEKMTKTKYDPIARKHVEFKETKIK</sequence>
<accession>A5VUU1</accession>
<comment type="similarity">
    <text evidence="1">Belongs to the bacterial ribosomal protein bL33 family.</text>
</comment>
<gene>
    <name evidence="1" type="primary">rpmG</name>
    <name type="ordered locus">BOV_A0574</name>
</gene>
<proteinExistence type="inferred from homology"/>
<protein>
    <recommendedName>
        <fullName evidence="1">Large ribosomal subunit protein bL33</fullName>
    </recommendedName>
    <alternativeName>
        <fullName evidence="2">50S ribosomal protein L33</fullName>
    </alternativeName>
</protein>